<organism>
    <name type="scientific">Tolumonas auensis (strain DSM 9187 / NBRC 110442 / TA 4)</name>
    <dbReference type="NCBI Taxonomy" id="595494"/>
    <lineage>
        <taxon>Bacteria</taxon>
        <taxon>Pseudomonadati</taxon>
        <taxon>Pseudomonadota</taxon>
        <taxon>Gammaproteobacteria</taxon>
        <taxon>Aeromonadales</taxon>
        <taxon>Aeromonadaceae</taxon>
        <taxon>Tolumonas</taxon>
    </lineage>
</organism>
<gene>
    <name evidence="1" type="primary">fabZ</name>
    <name type="ordered locus">Tola_2100</name>
</gene>
<keyword id="KW-0963">Cytoplasm</keyword>
<keyword id="KW-0441">Lipid A biosynthesis</keyword>
<keyword id="KW-0444">Lipid biosynthesis</keyword>
<keyword id="KW-0443">Lipid metabolism</keyword>
<keyword id="KW-0456">Lyase</keyword>
<keyword id="KW-1185">Reference proteome</keyword>
<dbReference type="EC" id="4.2.1.59" evidence="1"/>
<dbReference type="EMBL" id="CP001616">
    <property type="protein sequence ID" value="ACQ93699.1"/>
    <property type="molecule type" value="Genomic_DNA"/>
</dbReference>
<dbReference type="RefSeq" id="WP_015879167.1">
    <property type="nucleotide sequence ID" value="NC_012691.1"/>
</dbReference>
<dbReference type="SMR" id="C4L853"/>
<dbReference type="STRING" id="595494.Tola_2100"/>
<dbReference type="KEGG" id="tau:Tola_2100"/>
<dbReference type="eggNOG" id="COG0764">
    <property type="taxonomic scope" value="Bacteria"/>
</dbReference>
<dbReference type="HOGENOM" id="CLU_078912_1_0_6"/>
<dbReference type="OrthoDB" id="9772788at2"/>
<dbReference type="Proteomes" id="UP000009073">
    <property type="component" value="Chromosome"/>
</dbReference>
<dbReference type="GO" id="GO:0005737">
    <property type="term" value="C:cytoplasm"/>
    <property type="evidence" value="ECO:0007669"/>
    <property type="project" value="UniProtKB-SubCell"/>
</dbReference>
<dbReference type="GO" id="GO:0016020">
    <property type="term" value="C:membrane"/>
    <property type="evidence" value="ECO:0007669"/>
    <property type="project" value="GOC"/>
</dbReference>
<dbReference type="GO" id="GO:0019171">
    <property type="term" value="F:(3R)-hydroxyacyl-[acyl-carrier-protein] dehydratase activity"/>
    <property type="evidence" value="ECO:0007669"/>
    <property type="project" value="UniProtKB-EC"/>
</dbReference>
<dbReference type="GO" id="GO:0006633">
    <property type="term" value="P:fatty acid biosynthetic process"/>
    <property type="evidence" value="ECO:0007669"/>
    <property type="project" value="UniProtKB-UniRule"/>
</dbReference>
<dbReference type="GO" id="GO:0009245">
    <property type="term" value="P:lipid A biosynthetic process"/>
    <property type="evidence" value="ECO:0007669"/>
    <property type="project" value="UniProtKB-UniRule"/>
</dbReference>
<dbReference type="CDD" id="cd01288">
    <property type="entry name" value="FabZ"/>
    <property type="match status" value="1"/>
</dbReference>
<dbReference type="FunFam" id="3.10.129.10:FF:000001">
    <property type="entry name" value="3-hydroxyacyl-[acyl-carrier-protein] dehydratase FabZ"/>
    <property type="match status" value="1"/>
</dbReference>
<dbReference type="Gene3D" id="3.10.129.10">
    <property type="entry name" value="Hotdog Thioesterase"/>
    <property type="match status" value="1"/>
</dbReference>
<dbReference type="HAMAP" id="MF_00406">
    <property type="entry name" value="FabZ"/>
    <property type="match status" value="1"/>
</dbReference>
<dbReference type="InterPro" id="IPR013114">
    <property type="entry name" value="FabA_FabZ"/>
</dbReference>
<dbReference type="InterPro" id="IPR010084">
    <property type="entry name" value="FabZ"/>
</dbReference>
<dbReference type="InterPro" id="IPR029069">
    <property type="entry name" value="HotDog_dom_sf"/>
</dbReference>
<dbReference type="NCBIfam" id="TIGR01750">
    <property type="entry name" value="fabZ"/>
    <property type="match status" value="1"/>
</dbReference>
<dbReference type="NCBIfam" id="NF000582">
    <property type="entry name" value="PRK00006.1"/>
    <property type="match status" value="1"/>
</dbReference>
<dbReference type="PANTHER" id="PTHR30272">
    <property type="entry name" value="3-HYDROXYACYL-[ACYL-CARRIER-PROTEIN] DEHYDRATASE"/>
    <property type="match status" value="1"/>
</dbReference>
<dbReference type="PANTHER" id="PTHR30272:SF1">
    <property type="entry name" value="3-HYDROXYACYL-[ACYL-CARRIER-PROTEIN] DEHYDRATASE"/>
    <property type="match status" value="1"/>
</dbReference>
<dbReference type="Pfam" id="PF07977">
    <property type="entry name" value="FabA"/>
    <property type="match status" value="1"/>
</dbReference>
<dbReference type="SUPFAM" id="SSF54637">
    <property type="entry name" value="Thioesterase/thiol ester dehydrase-isomerase"/>
    <property type="match status" value="1"/>
</dbReference>
<accession>C4L853</accession>
<feature type="chain" id="PRO_1000205952" description="3-hydroxyacyl-[acyl-carrier-protein] dehydratase FabZ">
    <location>
        <begin position="1"/>
        <end position="151"/>
    </location>
</feature>
<feature type="active site" evidence="1">
    <location>
        <position position="57"/>
    </location>
</feature>
<evidence type="ECO:0000255" key="1">
    <source>
        <dbReference type="HAMAP-Rule" id="MF_00406"/>
    </source>
</evidence>
<comment type="function">
    <text evidence="1">Involved in unsaturated fatty acids biosynthesis. Catalyzes the dehydration of short chain beta-hydroxyacyl-ACPs and long chain saturated and unsaturated beta-hydroxyacyl-ACPs.</text>
</comment>
<comment type="catalytic activity">
    <reaction evidence="1">
        <text>a (3R)-hydroxyacyl-[ACP] = a (2E)-enoyl-[ACP] + H2O</text>
        <dbReference type="Rhea" id="RHEA:13097"/>
        <dbReference type="Rhea" id="RHEA-COMP:9925"/>
        <dbReference type="Rhea" id="RHEA-COMP:9945"/>
        <dbReference type="ChEBI" id="CHEBI:15377"/>
        <dbReference type="ChEBI" id="CHEBI:78784"/>
        <dbReference type="ChEBI" id="CHEBI:78827"/>
        <dbReference type="EC" id="4.2.1.59"/>
    </reaction>
</comment>
<comment type="subcellular location">
    <subcellularLocation>
        <location evidence="1">Cytoplasm</location>
    </subcellularLocation>
</comment>
<comment type="similarity">
    <text evidence="1">Belongs to the thioester dehydratase family. FabZ subfamily.</text>
</comment>
<name>FABZ_TOLAT</name>
<proteinExistence type="inferred from homology"/>
<sequence length="151" mass="17256">MNNELNQLDIQDILQLLPHRYPFLMVDRVVHYEMSEERKVLRAIKNVSFNEPFFQGHFPERPVFPGVLILEAMAQATGILAFRMVGKPNPGELYYFASIDNARFKRPVVPGDQLVLDVEYLKERRGIAKFTGVATVDGELVCSAELMCAKR</sequence>
<protein>
    <recommendedName>
        <fullName evidence="1">3-hydroxyacyl-[acyl-carrier-protein] dehydratase FabZ</fullName>
        <ecNumber evidence="1">4.2.1.59</ecNumber>
    </recommendedName>
    <alternativeName>
        <fullName evidence="1">(3R)-hydroxymyristoyl-[acyl-carrier-protein] dehydratase</fullName>
        <shortName evidence="1">(3R)-hydroxymyristoyl-ACP dehydrase</shortName>
    </alternativeName>
    <alternativeName>
        <fullName evidence="1">Beta-hydroxyacyl-ACP dehydratase</fullName>
    </alternativeName>
</protein>
<reference key="1">
    <citation type="submission" date="2009-05" db="EMBL/GenBank/DDBJ databases">
        <title>Complete sequence of Tolumonas auensis DSM 9187.</title>
        <authorList>
            <consortium name="US DOE Joint Genome Institute"/>
            <person name="Lucas S."/>
            <person name="Copeland A."/>
            <person name="Lapidus A."/>
            <person name="Glavina del Rio T."/>
            <person name="Tice H."/>
            <person name="Bruce D."/>
            <person name="Goodwin L."/>
            <person name="Pitluck S."/>
            <person name="Chertkov O."/>
            <person name="Brettin T."/>
            <person name="Detter J.C."/>
            <person name="Han C."/>
            <person name="Larimer F."/>
            <person name="Land M."/>
            <person name="Hauser L."/>
            <person name="Kyrpides N."/>
            <person name="Mikhailova N."/>
            <person name="Spring S."/>
            <person name="Beller H."/>
        </authorList>
    </citation>
    <scope>NUCLEOTIDE SEQUENCE [LARGE SCALE GENOMIC DNA]</scope>
    <source>
        <strain>DSM 9187 / NBRC 110442 / TA 4</strain>
    </source>
</reference>